<dbReference type="EMBL" id="M19348">
    <property type="protein sequence ID" value="AAA98102.1"/>
    <property type="molecule type" value="Genomic_DNA"/>
</dbReference>
<dbReference type="PIR" id="B30566">
    <property type="entry name" value="B30566"/>
</dbReference>
<dbReference type="Gene3D" id="1.10.287.1490">
    <property type="match status" value="1"/>
</dbReference>
<dbReference type="InterPro" id="IPR012892">
    <property type="entry name" value="Gp58"/>
</dbReference>
<dbReference type="Pfam" id="PF07902">
    <property type="entry name" value="Gp58"/>
    <property type="match status" value="1"/>
</dbReference>
<accession>P15317</accession>
<sequence>MSRDPTYTINEHDLSFADGRFYVTFKADKSSETVRLNSSCLGNTIIKKLQVEDDNTMHDFVKPKVTTQQAFGLAQQVKELDLQLKDPKSDLWGKIKFNNKAMLVEYANKEMSSAIAQSAEQILLQVKSIDDERYSKFEQTLNGIKQTVKSESVESARTQLASMFDSRISGLDGKYSRLSQTIDSLSSRLDDGVGNYSTLSQKVSGIDLRVSNAANDVSRLSQTAQGLQSQITNANQNYSSLSQTVQGLQTTVRDNQSNATSRINQLSDLISTKVTKGDVETTIAQSYDKIAFAIRDKLPASKMTGSEIISAINLDRSGVKITGKNITLDGNSYISNAVIKDAHIANMDAGKINTGYLNASRIAAEAITGDKIKMDYAFFNKLTANEGYFRTLFAKNIFTTSVQAVTTSASKITGGVLSATNGASRWDLNSANIDFNRDATINFNSKNNALVRKSGTNTAFVHFSNATPKGYRGSALYASIGITSSGDGIDSASSGRFCGVRFFRYAEGLQHTAKVDQAEIYGDDIVFSDDFNIDRGFKMRPSLMPKMVDLNKMYQAILALGRCWLHANNTAWSWNFDTRSAIIAEYNAHINNL</sequence>
<name>YHYA_BPH44</name>
<protein>
    <recommendedName>
        <fullName>Uncharacterized 65 kDa protein in hyaluronidase region</fullName>
    </recommendedName>
</protein>
<reference key="1">
    <citation type="journal article" date="1989" name="Infect. Immun.">
        <title>Sequence analysis and expression in Escherichia coli of the hyaluronidase gene of Streptococcus pyogenes bacteriophage H4489A.</title>
        <authorList>
            <person name="Hynes W.L."/>
            <person name="Ferretti J.J."/>
        </authorList>
    </citation>
    <scope>NUCLEOTIDE SEQUENCE [GENOMIC DNA]</scope>
</reference>
<feature type="chain" id="PRO_0000066261" description="Uncharacterized 65 kDa protein in hyaluronidase region">
    <location>
        <begin position="1"/>
        <end position="593"/>
    </location>
</feature>
<organism>
    <name type="scientific">Streptococcus pyogenes phage H4489A</name>
    <dbReference type="NCBI Taxonomy" id="12366"/>
    <lineage>
        <taxon>Viruses</taxon>
    </lineage>
</organism>
<proteinExistence type="predicted"/>
<organismHost>
    <name type="scientific">Streptococcus pyogenes</name>
    <dbReference type="NCBI Taxonomy" id="1314"/>
</organismHost>